<reference key="1">
    <citation type="submission" date="2001-02" db="EMBL/GenBank/DDBJ databases">
        <title>Identification of a novel ROK1-like protein in rat brain.</title>
        <authorList>
            <person name="Li W."/>
            <person name="Suzuki T."/>
        </authorList>
    </citation>
    <scope>NUCLEOTIDE SEQUENCE [MRNA]</scope>
    <source>
        <tissue>Brain</tissue>
    </source>
</reference>
<keyword id="KW-0007">Acetylation</keyword>
<keyword id="KW-0067">ATP-binding</keyword>
<keyword id="KW-0347">Helicase</keyword>
<keyword id="KW-0378">Hydrolase</keyword>
<keyword id="KW-0547">Nucleotide-binding</keyword>
<keyword id="KW-0539">Nucleus</keyword>
<keyword id="KW-0597">Phosphoprotein</keyword>
<keyword id="KW-1185">Reference proteome</keyword>
<keyword id="KW-0694">RNA-binding</keyword>
<sequence>MDSYDLFRRLGAGAKFDVKRFSADATRFQVGKRKFGSDSSETVKGLDFFGNKKSVSDECGGLQTQQELQNEETTEGGLLERSKEPKKKKRKKMTADVPAQEDLDGTIQWTSSVEAKLQDKKANGEKKLTSEKLEHLRKEKINFFRNKHKIHVQGTDLPDPIATFQQLDQEYKISPRLLQNILDAGFQVPTPIQMQAIPVMLHGRELLASAPTGSGKTLAFSIPILMQLKQPTNKGFRALVISPTRELASQIHRELIKISEGTGFRIHMIHKAAIAAKKFGPKSSKKFDILVTTPNRLIYLLKQEPPGIDLTSVEWLVVDESDKLFEDGKTGFRDQLASIFLACTSPKVRRAMFSATFAYDVEQWCKLNLDNIVSVSIGARNSAVETVEQELLFVGSETGKLLAMRELVKKGFNPPVLVFVQSIERAKELFHELIYEGINVDVIHAERTQQQRDNTVHSFRAGKIWVLICTALLARGIDFKGVNLVINYDFPTSSVEYIHRIGRTGRAGNRGKAVTFFTEDDKPLLRSVANVIQQAGCPVPEYIKGFQKLLSKQKKKMIKKPLERESISTTPKYFLEQAKQKKVAGQNSKKKETLKGKS</sequence>
<evidence type="ECO:0000250" key="1"/>
<evidence type="ECO:0000250" key="2">
    <source>
        <dbReference type="UniProtKB" id="Q9VVK8"/>
    </source>
</evidence>
<evidence type="ECO:0000250" key="3">
    <source>
        <dbReference type="UniProtKB" id="Q9Y2R4"/>
    </source>
</evidence>
<evidence type="ECO:0000255" key="4">
    <source>
        <dbReference type="PROSITE-ProRule" id="PRU00541"/>
    </source>
</evidence>
<evidence type="ECO:0000255" key="5">
    <source>
        <dbReference type="PROSITE-ProRule" id="PRU00542"/>
    </source>
</evidence>
<evidence type="ECO:0000256" key="6">
    <source>
        <dbReference type="SAM" id="MobiDB-lite"/>
    </source>
</evidence>
<evidence type="ECO:0000305" key="7"/>
<comment type="function">
    <text evidence="2">Required for efficient ribosome biogenesis. May control cell cycle progression by regulating translation of mRNAs that contain a terminal oligo pyrimidine (TOP) motif in their 5' UTRs, such as GTPBP4.</text>
</comment>
<comment type="catalytic activity">
    <reaction>
        <text>ATP + H2O = ADP + phosphate + H(+)</text>
        <dbReference type="Rhea" id="RHEA:13065"/>
        <dbReference type="ChEBI" id="CHEBI:15377"/>
        <dbReference type="ChEBI" id="CHEBI:15378"/>
        <dbReference type="ChEBI" id="CHEBI:30616"/>
        <dbReference type="ChEBI" id="CHEBI:43474"/>
        <dbReference type="ChEBI" id="CHEBI:456216"/>
        <dbReference type="EC" id="3.6.4.13"/>
    </reaction>
</comment>
<comment type="subcellular location">
    <subcellularLocation>
        <location evidence="1">Nucleus</location>
        <location evidence="1">Nucleolus</location>
    </subcellularLocation>
</comment>
<comment type="similarity">
    <text evidence="7">Belongs to the DEAD box helicase family. DDX52/ROK1 subfamily.</text>
</comment>
<organism>
    <name type="scientific">Rattus norvegicus</name>
    <name type="common">Rat</name>
    <dbReference type="NCBI Taxonomy" id="10116"/>
    <lineage>
        <taxon>Eukaryota</taxon>
        <taxon>Metazoa</taxon>
        <taxon>Chordata</taxon>
        <taxon>Craniata</taxon>
        <taxon>Vertebrata</taxon>
        <taxon>Euteleostomi</taxon>
        <taxon>Mammalia</taxon>
        <taxon>Eutheria</taxon>
        <taxon>Euarchontoglires</taxon>
        <taxon>Glires</taxon>
        <taxon>Rodentia</taxon>
        <taxon>Myomorpha</taxon>
        <taxon>Muroidea</taxon>
        <taxon>Muridae</taxon>
        <taxon>Murinae</taxon>
        <taxon>Rattus</taxon>
    </lineage>
</organism>
<proteinExistence type="evidence at transcript level"/>
<protein>
    <recommendedName>
        <fullName>Probable ATP-dependent RNA helicase DDX52</fullName>
        <ecNumber>3.6.4.13</ecNumber>
    </recommendedName>
    <alternativeName>
        <fullName>ATP-dependent RNA helicase ROK1-like</fullName>
        <shortName>rROK1L</shortName>
    </alternativeName>
    <alternativeName>
        <fullName>DEAD box protein 52</fullName>
    </alternativeName>
</protein>
<feature type="chain" id="PRO_0000055062" description="Probable ATP-dependent RNA helicase DDX52">
    <location>
        <begin position="1"/>
        <end position="598"/>
    </location>
</feature>
<feature type="domain" description="Helicase ATP-binding" evidence="4">
    <location>
        <begin position="197"/>
        <end position="375"/>
    </location>
</feature>
<feature type="domain" description="Helicase C-terminal" evidence="5">
    <location>
        <begin position="386"/>
        <end position="547"/>
    </location>
</feature>
<feature type="region of interest" description="Disordered" evidence="6">
    <location>
        <begin position="59"/>
        <end position="98"/>
    </location>
</feature>
<feature type="region of interest" description="Disordered" evidence="6">
    <location>
        <begin position="578"/>
        <end position="598"/>
    </location>
</feature>
<feature type="short sequence motif" description="Q motif">
    <location>
        <begin position="166"/>
        <end position="194"/>
    </location>
</feature>
<feature type="short sequence motif" description="DEAD box">
    <location>
        <begin position="319"/>
        <end position="322"/>
    </location>
</feature>
<feature type="compositionally biased region" description="Basic and acidic residues" evidence="6">
    <location>
        <begin position="589"/>
        <end position="598"/>
    </location>
</feature>
<feature type="binding site" evidence="4">
    <location>
        <begin position="210"/>
        <end position="217"/>
    </location>
    <ligand>
        <name>ATP</name>
        <dbReference type="ChEBI" id="CHEBI:30616"/>
    </ligand>
</feature>
<feature type="modified residue" description="N6-acetyllysine" evidence="3">
    <location>
        <position position="15"/>
    </location>
</feature>
<feature type="modified residue" description="Phosphoserine" evidence="3">
    <location>
        <position position="39"/>
    </location>
</feature>
<dbReference type="EC" id="3.6.4.13"/>
<dbReference type="EMBL" id="AB055628">
    <property type="protein sequence ID" value="BAB32441.1"/>
    <property type="molecule type" value="mRNA"/>
</dbReference>
<dbReference type="RefSeq" id="NP_445977.1">
    <property type="nucleotide sequence ID" value="NM_053525.1"/>
</dbReference>
<dbReference type="SMR" id="Q99PT0"/>
<dbReference type="FunCoup" id="Q99PT0">
    <property type="interactions" value="2548"/>
</dbReference>
<dbReference type="STRING" id="10116.ENSRNOP00000003600"/>
<dbReference type="CarbonylDB" id="Q99PT0"/>
<dbReference type="PhosphoSitePlus" id="Q99PT0"/>
<dbReference type="PaxDb" id="10116-ENSRNOP00000003600"/>
<dbReference type="Ensembl" id="ENSRNOT00000003600.7">
    <property type="protein sequence ID" value="ENSRNOP00000003600.3"/>
    <property type="gene ID" value="ENSRNOG00000002612.7"/>
</dbReference>
<dbReference type="GeneID" id="85432"/>
<dbReference type="KEGG" id="rno:85432"/>
<dbReference type="AGR" id="RGD:621743"/>
<dbReference type="CTD" id="11056"/>
<dbReference type="RGD" id="621743">
    <property type="gene designation" value="Ddx52"/>
</dbReference>
<dbReference type="eggNOG" id="KOG0344">
    <property type="taxonomic scope" value="Eukaryota"/>
</dbReference>
<dbReference type="GeneTree" id="ENSGT00550000074863"/>
<dbReference type="HOGENOM" id="CLU_003041_1_4_1"/>
<dbReference type="InParanoid" id="Q99PT0"/>
<dbReference type="OMA" id="EMAHSIM"/>
<dbReference type="OrthoDB" id="360161at2759"/>
<dbReference type="PhylomeDB" id="Q99PT0"/>
<dbReference type="TreeFam" id="TF314448"/>
<dbReference type="Reactome" id="R-RNO-6791226">
    <property type="pathway name" value="Major pathway of rRNA processing in the nucleolus and cytosol"/>
</dbReference>
<dbReference type="PRO" id="PR:Q99PT0"/>
<dbReference type="Proteomes" id="UP000002494">
    <property type="component" value="Chromosome 10"/>
</dbReference>
<dbReference type="Bgee" id="ENSRNOG00000002612">
    <property type="expression patterns" value="Expressed in thymus and 20 other cell types or tissues"/>
</dbReference>
<dbReference type="GO" id="GO:0005730">
    <property type="term" value="C:nucleolus"/>
    <property type="evidence" value="ECO:0007669"/>
    <property type="project" value="UniProtKB-SubCell"/>
</dbReference>
<dbReference type="GO" id="GO:0005524">
    <property type="term" value="F:ATP binding"/>
    <property type="evidence" value="ECO:0007669"/>
    <property type="project" value="UniProtKB-KW"/>
</dbReference>
<dbReference type="GO" id="GO:0016887">
    <property type="term" value="F:ATP hydrolysis activity"/>
    <property type="evidence" value="ECO:0007669"/>
    <property type="project" value="RHEA"/>
</dbReference>
<dbReference type="GO" id="GO:0003723">
    <property type="term" value="F:RNA binding"/>
    <property type="evidence" value="ECO:0007669"/>
    <property type="project" value="UniProtKB-KW"/>
</dbReference>
<dbReference type="GO" id="GO:0003724">
    <property type="term" value="F:RNA helicase activity"/>
    <property type="evidence" value="ECO:0000303"/>
    <property type="project" value="RGD"/>
</dbReference>
<dbReference type="GO" id="GO:0030490">
    <property type="term" value="P:maturation of SSU-rRNA"/>
    <property type="evidence" value="ECO:0000318"/>
    <property type="project" value="GO_Central"/>
</dbReference>
<dbReference type="GO" id="GO:0006364">
    <property type="term" value="P:rRNA processing"/>
    <property type="evidence" value="ECO:0000304"/>
    <property type="project" value="RGD"/>
</dbReference>
<dbReference type="CDD" id="cd17957">
    <property type="entry name" value="DEADc_DDX52"/>
    <property type="match status" value="1"/>
</dbReference>
<dbReference type="CDD" id="cd18787">
    <property type="entry name" value="SF2_C_DEAD"/>
    <property type="match status" value="1"/>
</dbReference>
<dbReference type="FunFam" id="3.40.50.300:FF:000906">
    <property type="entry name" value="Probable ATP-dependent RNA helicase DDX52"/>
    <property type="match status" value="1"/>
</dbReference>
<dbReference type="FunFam" id="3.40.50.300:FF:000759">
    <property type="entry name" value="probable ATP-dependent RNA helicase DDX52"/>
    <property type="match status" value="1"/>
</dbReference>
<dbReference type="Gene3D" id="3.40.50.300">
    <property type="entry name" value="P-loop containing nucleotide triphosphate hydrolases"/>
    <property type="match status" value="2"/>
</dbReference>
<dbReference type="InterPro" id="IPR044764">
    <property type="entry name" value="DDX52/Rok1_DEADc"/>
</dbReference>
<dbReference type="InterPro" id="IPR011545">
    <property type="entry name" value="DEAD/DEAH_box_helicase_dom"/>
</dbReference>
<dbReference type="InterPro" id="IPR050079">
    <property type="entry name" value="DEAD_box_RNA_helicase"/>
</dbReference>
<dbReference type="InterPro" id="IPR014001">
    <property type="entry name" value="Helicase_ATP-bd"/>
</dbReference>
<dbReference type="InterPro" id="IPR001650">
    <property type="entry name" value="Helicase_C-like"/>
</dbReference>
<dbReference type="InterPro" id="IPR027417">
    <property type="entry name" value="P-loop_NTPase"/>
</dbReference>
<dbReference type="InterPro" id="IPR014014">
    <property type="entry name" value="RNA_helicase_DEAD_Q_motif"/>
</dbReference>
<dbReference type="PANTHER" id="PTHR47959">
    <property type="entry name" value="ATP-DEPENDENT RNA HELICASE RHLE-RELATED"/>
    <property type="match status" value="1"/>
</dbReference>
<dbReference type="PANTHER" id="PTHR47959:SF15">
    <property type="entry name" value="RNA HELICASE"/>
    <property type="match status" value="1"/>
</dbReference>
<dbReference type="Pfam" id="PF00270">
    <property type="entry name" value="DEAD"/>
    <property type="match status" value="1"/>
</dbReference>
<dbReference type="Pfam" id="PF00271">
    <property type="entry name" value="Helicase_C"/>
    <property type="match status" value="1"/>
</dbReference>
<dbReference type="SMART" id="SM00487">
    <property type="entry name" value="DEXDc"/>
    <property type="match status" value="1"/>
</dbReference>
<dbReference type="SMART" id="SM00490">
    <property type="entry name" value="HELICc"/>
    <property type="match status" value="1"/>
</dbReference>
<dbReference type="SUPFAM" id="SSF52540">
    <property type="entry name" value="P-loop containing nucleoside triphosphate hydrolases"/>
    <property type="match status" value="1"/>
</dbReference>
<dbReference type="PROSITE" id="PS51192">
    <property type="entry name" value="HELICASE_ATP_BIND_1"/>
    <property type="match status" value="1"/>
</dbReference>
<dbReference type="PROSITE" id="PS51194">
    <property type="entry name" value="HELICASE_CTER"/>
    <property type="match status" value="1"/>
</dbReference>
<dbReference type="PROSITE" id="PS51195">
    <property type="entry name" value="Q_MOTIF"/>
    <property type="match status" value="1"/>
</dbReference>
<name>DDX52_RAT</name>
<accession>Q99PT0</accession>
<gene>
    <name type="primary">Ddx52</name>
    <name type="synonym">Rok1</name>
</gene>